<proteinExistence type="evidence at protein level"/>
<reference key="1">
    <citation type="journal article" date="2004" name="Nat. Biotechnol.">
        <title>Complete genome sequence of the metabolically versatile photosynthetic bacterium Rhodopseudomonas palustris.</title>
        <authorList>
            <person name="Larimer F.W."/>
            <person name="Chain P."/>
            <person name="Hauser L."/>
            <person name="Lamerdin J.E."/>
            <person name="Malfatti S."/>
            <person name="Do L."/>
            <person name="Land M.L."/>
            <person name="Pelletier D.A."/>
            <person name="Beatty J.T."/>
            <person name="Lang A.S."/>
            <person name="Tabita F.R."/>
            <person name="Gibson J.L."/>
            <person name="Hanson T.E."/>
            <person name="Bobst C."/>
            <person name="Torres y Torres J.L."/>
            <person name="Peres C."/>
            <person name="Harrison F.H."/>
            <person name="Gibson J."/>
            <person name="Harwood C.S."/>
        </authorList>
    </citation>
    <scope>NUCLEOTIDE SEQUENCE [LARGE SCALE GENOMIC DNA]</scope>
    <source>
        <strain>ATCC BAA-98 / CGA009</strain>
    </source>
</reference>
<reference key="2">
    <citation type="journal article" date="2004" name="J. Proteome Res.">
        <title>Characterization of the 70S ribosome from Rhodopseudomonas palustris using an integrated 'top-down' and 'bottom-up' mass spectrometric approach.</title>
        <authorList>
            <person name="Strader M.B."/>
            <person name="VerBerkmoes N.C."/>
            <person name="Tabb D.L."/>
            <person name="Connelly H.M."/>
            <person name="Barton J.W."/>
            <person name="Bruce B.D."/>
            <person name="Pelletier D.A."/>
            <person name="Davison B.H."/>
            <person name="Hettich R.L."/>
            <person name="Larimer F.W."/>
            <person name="Hurst G.B."/>
        </authorList>
    </citation>
    <scope>MASS SPECTROMETRY</scope>
    <source>
        <strain>ATCC BAA-98 / CGA009</strain>
    </source>
</reference>
<name>RL35_RHOPA</name>
<sequence>MPKLKTKSGAKKRFKVTATGKVMSAQRGKRHGMIKRTKKQIRQLRGTRAIFKTDGDNIKKYFLPNA</sequence>
<accession>Q6NDR5</accession>
<protein>
    <recommendedName>
        <fullName evidence="1">Large ribosomal subunit protein bL35</fullName>
    </recommendedName>
    <alternativeName>
        <fullName evidence="4">50S ribosomal protein L35</fullName>
    </alternativeName>
    <alternativeName>
        <fullName>RRP-L35</fullName>
    </alternativeName>
</protein>
<dbReference type="EMBL" id="BX572593">
    <property type="protein sequence ID" value="CAE25483.1"/>
    <property type="molecule type" value="Genomic_DNA"/>
</dbReference>
<dbReference type="RefSeq" id="WP_011155610.1">
    <property type="nucleotide sequence ID" value="NZ_CP116810.1"/>
</dbReference>
<dbReference type="SMR" id="Q6NDR5"/>
<dbReference type="IntAct" id="Q6NDR5">
    <property type="interactions" value="1"/>
</dbReference>
<dbReference type="STRING" id="258594.RPA0039"/>
<dbReference type="GeneID" id="66891038"/>
<dbReference type="eggNOG" id="COG0291">
    <property type="taxonomic scope" value="Bacteria"/>
</dbReference>
<dbReference type="HOGENOM" id="CLU_169643_2_1_5"/>
<dbReference type="PhylomeDB" id="Q6NDR5"/>
<dbReference type="GO" id="GO:0022625">
    <property type="term" value="C:cytosolic large ribosomal subunit"/>
    <property type="evidence" value="ECO:0007669"/>
    <property type="project" value="TreeGrafter"/>
</dbReference>
<dbReference type="GO" id="GO:0003735">
    <property type="term" value="F:structural constituent of ribosome"/>
    <property type="evidence" value="ECO:0007669"/>
    <property type="project" value="InterPro"/>
</dbReference>
<dbReference type="GO" id="GO:0006412">
    <property type="term" value="P:translation"/>
    <property type="evidence" value="ECO:0007669"/>
    <property type="project" value="UniProtKB-UniRule"/>
</dbReference>
<dbReference type="FunFam" id="4.10.410.60:FF:000001">
    <property type="entry name" value="50S ribosomal protein L35"/>
    <property type="match status" value="1"/>
</dbReference>
<dbReference type="Gene3D" id="4.10.410.60">
    <property type="match status" value="1"/>
</dbReference>
<dbReference type="HAMAP" id="MF_00514">
    <property type="entry name" value="Ribosomal_bL35"/>
    <property type="match status" value="1"/>
</dbReference>
<dbReference type="InterPro" id="IPR001706">
    <property type="entry name" value="Ribosomal_bL35"/>
</dbReference>
<dbReference type="InterPro" id="IPR021137">
    <property type="entry name" value="Ribosomal_bL35-like"/>
</dbReference>
<dbReference type="InterPro" id="IPR018265">
    <property type="entry name" value="Ribosomal_bL35_CS"/>
</dbReference>
<dbReference type="InterPro" id="IPR037229">
    <property type="entry name" value="Ribosomal_bL35_sf"/>
</dbReference>
<dbReference type="NCBIfam" id="TIGR00001">
    <property type="entry name" value="rpmI_bact"/>
    <property type="match status" value="1"/>
</dbReference>
<dbReference type="PANTHER" id="PTHR33343">
    <property type="entry name" value="54S RIBOSOMAL PROTEIN BL35M"/>
    <property type="match status" value="1"/>
</dbReference>
<dbReference type="PANTHER" id="PTHR33343:SF1">
    <property type="entry name" value="LARGE RIBOSOMAL SUBUNIT PROTEIN BL35M"/>
    <property type="match status" value="1"/>
</dbReference>
<dbReference type="Pfam" id="PF01632">
    <property type="entry name" value="Ribosomal_L35p"/>
    <property type="match status" value="1"/>
</dbReference>
<dbReference type="PRINTS" id="PR00064">
    <property type="entry name" value="RIBOSOMALL35"/>
</dbReference>
<dbReference type="SUPFAM" id="SSF143034">
    <property type="entry name" value="L35p-like"/>
    <property type="match status" value="1"/>
</dbReference>
<dbReference type="PROSITE" id="PS00936">
    <property type="entry name" value="RIBOSOMAL_L35"/>
    <property type="match status" value="1"/>
</dbReference>
<organism>
    <name type="scientific">Rhodopseudomonas palustris (strain ATCC BAA-98 / CGA009)</name>
    <dbReference type="NCBI Taxonomy" id="258594"/>
    <lineage>
        <taxon>Bacteria</taxon>
        <taxon>Pseudomonadati</taxon>
        <taxon>Pseudomonadota</taxon>
        <taxon>Alphaproteobacteria</taxon>
        <taxon>Hyphomicrobiales</taxon>
        <taxon>Nitrobacteraceae</taxon>
        <taxon>Rhodopseudomonas</taxon>
    </lineage>
</organism>
<keyword id="KW-0687">Ribonucleoprotein</keyword>
<keyword id="KW-0689">Ribosomal protein</keyword>
<feature type="initiator methionine" description="Removed">
    <location>
        <position position="1"/>
    </location>
</feature>
<feature type="chain" id="PRO_0000177410" description="Large ribosomal subunit protein bL35">
    <location>
        <begin position="2"/>
        <end position="66"/>
    </location>
</feature>
<feature type="region of interest" description="Disordered" evidence="2">
    <location>
        <begin position="22"/>
        <end position="41"/>
    </location>
</feature>
<feature type="compositionally biased region" description="Basic residues" evidence="2">
    <location>
        <begin position="27"/>
        <end position="41"/>
    </location>
</feature>
<evidence type="ECO:0000255" key="1">
    <source>
        <dbReference type="HAMAP-Rule" id="MF_00514"/>
    </source>
</evidence>
<evidence type="ECO:0000256" key="2">
    <source>
        <dbReference type="SAM" id="MobiDB-lite"/>
    </source>
</evidence>
<evidence type="ECO:0000269" key="3">
    <source>
    </source>
</evidence>
<evidence type="ECO:0000305" key="4"/>
<comment type="mass spectrometry"/>
<comment type="similarity">
    <text evidence="1">Belongs to the bacterial ribosomal protein bL35 family.</text>
</comment>
<gene>
    <name evidence="1" type="primary">rpmI</name>
    <name type="ordered locus">RPA0039</name>
</gene>